<feature type="chain" id="PRO_0000374244" description="tRNA-2-methylthio-N(6)-dimethylallyladenosine synthase">
    <location>
        <begin position="1"/>
        <end position="439"/>
    </location>
</feature>
<feature type="domain" description="MTTase N-terminal" evidence="1">
    <location>
        <begin position="2"/>
        <end position="119"/>
    </location>
</feature>
<feature type="domain" description="Radical SAM core" evidence="2">
    <location>
        <begin position="142"/>
        <end position="374"/>
    </location>
</feature>
<feature type="domain" description="TRAM" evidence="1">
    <location>
        <begin position="377"/>
        <end position="439"/>
    </location>
</feature>
<feature type="binding site" evidence="1">
    <location>
        <position position="11"/>
    </location>
    <ligand>
        <name>[4Fe-4S] cluster</name>
        <dbReference type="ChEBI" id="CHEBI:49883"/>
        <label>1</label>
    </ligand>
</feature>
<feature type="binding site" evidence="1">
    <location>
        <position position="48"/>
    </location>
    <ligand>
        <name>[4Fe-4S] cluster</name>
        <dbReference type="ChEBI" id="CHEBI:49883"/>
        <label>1</label>
    </ligand>
</feature>
<feature type="binding site" evidence="1">
    <location>
        <position position="82"/>
    </location>
    <ligand>
        <name>[4Fe-4S] cluster</name>
        <dbReference type="ChEBI" id="CHEBI:49883"/>
        <label>1</label>
    </ligand>
</feature>
<feature type="binding site" evidence="1">
    <location>
        <position position="156"/>
    </location>
    <ligand>
        <name>[4Fe-4S] cluster</name>
        <dbReference type="ChEBI" id="CHEBI:49883"/>
        <label>2</label>
        <note>4Fe-4S-S-AdoMet</note>
    </ligand>
</feature>
<feature type="binding site" evidence="1">
    <location>
        <position position="160"/>
    </location>
    <ligand>
        <name>[4Fe-4S] cluster</name>
        <dbReference type="ChEBI" id="CHEBI:49883"/>
        <label>2</label>
        <note>4Fe-4S-S-AdoMet</note>
    </ligand>
</feature>
<feature type="binding site" evidence="1">
    <location>
        <position position="163"/>
    </location>
    <ligand>
        <name>[4Fe-4S] cluster</name>
        <dbReference type="ChEBI" id="CHEBI:49883"/>
        <label>2</label>
        <note>4Fe-4S-S-AdoMet</note>
    </ligand>
</feature>
<evidence type="ECO:0000255" key="1">
    <source>
        <dbReference type="HAMAP-Rule" id="MF_01864"/>
    </source>
</evidence>
<evidence type="ECO:0000255" key="2">
    <source>
        <dbReference type="PROSITE-ProRule" id="PRU01266"/>
    </source>
</evidence>
<comment type="function">
    <text evidence="1">Catalyzes the methylthiolation of N6-(dimethylallyl)adenosine (i(6)A), leading to the formation of 2-methylthio-N6-(dimethylallyl)adenosine (ms(2)i(6)A) at position 37 in tRNAs that read codons beginning with uridine.</text>
</comment>
<comment type="catalytic activity">
    <reaction evidence="1">
        <text>N(6)-dimethylallyladenosine(37) in tRNA + (sulfur carrier)-SH + AH2 + 2 S-adenosyl-L-methionine = 2-methylsulfanyl-N(6)-dimethylallyladenosine(37) in tRNA + (sulfur carrier)-H + 5'-deoxyadenosine + L-methionine + A + S-adenosyl-L-homocysteine + 2 H(+)</text>
        <dbReference type="Rhea" id="RHEA:37067"/>
        <dbReference type="Rhea" id="RHEA-COMP:10375"/>
        <dbReference type="Rhea" id="RHEA-COMP:10376"/>
        <dbReference type="Rhea" id="RHEA-COMP:14737"/>
        <dbReference type="Rhea" id="RHEA-COMP:14739"/>
        <dbReference type="ChEBI" id="CHEBI:13193"/>
        <dbReference type="ChEBI" id="CHEBI:15378"/>
        <dbReference type="ChEBI" id="CHEBI:17319"/>
        <dbReference type="ChEBI" id="CHEBI:17499"/>
        <dbReference type="ChEBI" id="CHEBI:29917"/>
        <dbReference type="ChEBI" id="CHEBI:57844"/>
        <dbReference type="ChEBI" id="CHEBI:57856"/>
        <dbReference type="ChEBI" id="CHEBI:59789"/>
        <dbReference type="ChEBI" id="CHEBI:64428"/>
        <dbReference type="ChEBI" id="CHEBI:74415"/>
        <dbReference type="ChEBI" id="CHEBI:74417"/>
        <dbReference type="EC" id="2.8.4.3"/>
    </reaction>
</comment>
<comment type="cofactor">
    <cofactor evidence="1">
        <name>[4Fe-4S] cluster</name>
        <dbReference type="ChEBI" id="CHEBI:49883"/>
    </cofactor>
    <text evidence="1">Binds 2 [4Fe-4S] clusters. One cluster is coordinated with 3 cysteines and an exchangeable S-adenosyl-L-methionine.</text>
</comment>
<comment type="subunit">
    <text evidence="1">Monomer.</text>
</comment>
<comment type="subcellular location">
    <subcellularLocation>
        <location evidence="1">Cytoplasm</location>
    </subcellularLocation>
</comment>
<comment type="similarity">
    <text evidence="1">Belongs to the methylthiotransferase family. MiaB subfamily.</text>
</comment>
<proteinExistence type="inferred from homology"/>
<name>MIAB_COXBU</name>
<organism>
    <name type="scientific">Coxiella burnetii (strain RSA 493 / Nine Mile phase I)</name>
    <dbReference type="NCBI Taxonomy" id="227377"/>
    <lineage>
        <taxon>Bacteria</taxon>
        <taxon>Pseudomonadati</taxon>
        <taxon>Pseudomonadota</taxon>
        <taxon>Gammaproteobacteria</taxon>
        <taxon>Legionellales</taxon>
        <taxon>Coxiellaceae</taxon>
        <taxon>Coxiella</taxon>
    </lineage>
</organism>
<protein>
    <recommendedName>
        <fullName evidence="1">tRNA-2-methylthio-N(6)-dimethylallyladenosine synthase</fullName>
        <ecNumber evidence="1">2.8.4.3</ecNumber>
    </recommendedName>
    <alternativeName>
        <fullName evidence="1">(Dimethylallyl)adenosine tRNA methylthiotransferase MiaB</fullName>
    </alternativeName>
    <alternativeName>
        <fullName evidence="1">tRNA-i(6)A37 methylthiotransferase</fullName>
    </alternativeName>
</protein>
<reference key="1">
    <citation type="journal article" date="2003" name="Proc. Natl. Acad. Sci. U.S.A.">
        <title>Complete genome sequence of the Q-fever pathogen, Coxiella burnetii.</title>
        <authorList>
            <person name="Seshadri R."/>
            <person name="Paulsen I.T."/>
            <person name="Eisen J.A."/>
            <person name="Read T.D."/>
            <person name="Nelson K.E."/>
            <person name="Nelson W.C."/>
            <person name="Ward N.L."/>
            <person name="Tettelin H."/>
            <person name="Davidsen T.M."/>
            <person name="Beanan M.J."/>
            <person name="DeBoy R.T."/>
            <person name="Daugherty S.C."/>
            <person name="Brinkac L.M."/>
            <person name="Madupu R."/>
            <person name="Dodson R.J."/>
            <person name="Khouri H.M."/>
            <person name="Lee K.H."/>
            <person name="Carty H.A."/>
            <person name="Scanlan D."/>
            <person name="Heinzen R.A."/>
            <person name="Thompson H.A."/>
            <person name="Samuel J.E."/>
            <person name="Fraser C.M."/>
            <person name="Heidelberg J.F."/>
        </authorList>
    </citation>
    <scope>NUCLEOTIDE SEQUENCE [LARGE SCALE GENOMIC DNA]</scope>
    <source>
        <strain>RSA 493 / Nine Mile phase I</strain>
    </source>
</reference>
<accession>Q83DX3</accession>
<sequence>MKKLYLKTHGCQMNEYDSAKMADVLKFSHGLELTEDPAVADVFLLNTCSVREKAQTKVFSELGRWRPFKEKRPHVVIGVGGCVASQEGETILKQAPFVDIVFGPQTLHRLPDLLDSVIQKRKSVVDITFPEIEKFDRLPQPRAEGPSAFVSIMEGCSKYCTFCVVPYTRGEEISRPFDDVIAEVASLCEQGVREITLLGQNVNDYRGLMHDGQVADLALLIHYLAAMDNIERIRFTTSHPSAFSENLIDAYAEEPKLANHLHLPVQSGSDRILAAMKRNYTVLEYKSKIRKLRAVRPDISLSSDFIIGFPGETDADFEATMNLIHDMGFDHSFSFIYSPRPGTPAAQLPDDVPMAVKKERLAILQNRINAKAAEISQSMVGTQQRILVTGPSKKYPDQLSGRTENNRVVNFNGDTPLIGQMVTIKIKEARPYSLWGEIC</sequence>
<gene>
    <name evidence="1" type="primary">miaB</name>
    <name type="ordered locus">CBU_0569</name>
</gene>
<keyword id="KW-0004">4Fe-4S</keyword>
<keyword id="KW-0963">Cytoplasm</keyword>
<keyword id="KW-0408">Iron</keyword>
<keyword id="KW-0411">Iron-sulfur</keyword>
<keyword id="KW-0479">Metal-binding</keyword>
<keyword id="KW-1185">Reference proteome</keyword>
<keyword id="KW-0949">S-adenosyl-L-methionine</keyword>
<keyword id="KW-0808">Transferase</keyword>
<keyword id="KW-0819">tRNA processing</keyword>
<dbReference type="EC" id="2.8.4.3" evidence="1"/>
<dbReference type="EMBL" id="AE016828">
    <property type="protein sequence ID" value="AAO90113.1"/>
    <property type="molecule type" value="Genomic_DNA"/>
</dbReference>
<dbReference type="RefSeq" id="NP_819599.1">
    <property type="nucleotide sequence ID" value="NC_002971.3"/>
</dbReference>
<dbReference type="RefSeq" id="WP_005771098.1">
    <property type="nucleotide sequence ID" value="NZ_CCYB01000049.1"/>
</dbReference>
<dbReference type="SMR" id="Q83DX3"/>
<dbReference type="STRING" id="227377.CBU_0569"/>
<dbReference type="EnsemblBacteria" id="AAO90113">
    <property type="protein sequence ID" value="AAO90113"/>
    <property type="gene ID" value="CBU_0569"/>
</dbReference>
<dbReference type="GeneID" id="1208454"/>
<dbReference type="KEGG" id="cbu:CBU_0569"/>
<dbReference type="PATRIC" id="fig|227377.7.peg.563"/>
<dbReference type="eggNOG" id="COG0621">
    <property type="taxonomic scope" value="Bacteria"/>
</dbReference>
<dbReference type="HOGENOM" id="CLU_018697_2_0_6"/>
<dbReference type="OrthoDB" id="9805215at2"/>
<dbReference type="Proteomes" id="UP000002671">
    <property type="component" value="Chromosome"/>
</dbReference>
<dbReference type="GO" id="GO:0005829">
    <property type="term" value="C:cytosol"/>
    <property type="evidence" value="ECO:0000318"/>
    <property type="project" value="GO_Central"/>
</dbReference>
<dbReference type="GO" id="GO:0051539">
    <property type="term" value="F:4 iron, 4 sulfur cluster binding"/>
    <property type="evidence" value="ECO:0000318"/>
    <property type="project" value="GO_Central"/>
</dbReference>
<dbReference type="GO" id="GO:0046872">
    <property type="term" value="F:metal ion binding"/>
    <property type="evidence" value="ECO:0007669"/>
    <property type="project" value="UniProtKB-KW"/>
</dbReference>
<dbReference type="GO" id="GO:0035597">
    <property type="term" value="F:N6-isopentenyladenosine methylthiotransferase activity"/>
    <property type="evidence" value="ECO:0000318"/>
    <property type="project" value="GO_Central"/>
</dbReference>
<dbReference type="GO" id="GO:0035600">
    <property type="term" value="P:tRNA methylthiolation"/>
    <property type="evidence" value="ECO:0000318"/>
    <property type="project" value="GO_Central"/>
</dbReference>
<dbReference type="CDD" id="cd01335">
    <property type="entry name" value="Radical_SAM"/>
    <property type="match status" value="1"/>
</dbReference>
<dbReference type="FunFam" id="3.40.50.12160:FF:000001">
    <property type="entry name" value="tRNA-2-methylthio-N(6)-dimethylallyladenosine synthase"/>
    <property type="match status" value="1"/>
</dbReference>
<dbReference type="FunFam" id="3.80.30.20:FF:000001">
    <property type="entry name" value="tRNA-2-methylthio-N(6)-dimethylallyladenosine synthase 2"/>
    <property type="match status" value="1"/>
</dbReference>
<dbReference type="Gene3D" id="3.40.50.12160">
    <property type="entry name" value="Methylthiotransferase, N-terminal domain"/>
    <property type="match status" value="1"/>
</dbReference>
<dbReference type="Gene3D" id="3.80.30.20">
    <property type="entry name" value="tm_1862 like domain"/>
    <property type="match status" value="1"/>
</dbReference>
<dbReference type="HAMAP" id="MF_01864">
    <property type="entry name" value="tRNA_metthiotr_MiaB"/>
    <property type="match status" value="1"/>
</dbReference>
<dbReference type="InterPro" id="IPR006638">
    <property type="entry name" value="Elp3/MiaA/NifB-like_rSAM"/>
</dbReference>
<dbReference type="InterPro" id="IPR005839">
    <property type="entry name" value="Methylthiotransferase"/>
</dbReference>
<dbReference type="InterPro" id="IPR020612">
    <property type="entry name" value="Methylthiotransferase_CS"/>
</dbReference>
<dbReference type="InterPro" id="IPR013848">
    <property type="entry name" value="Methylthiotransferase_N"/>
</dbReference>
<dbReference type="InterPro" id="IPR038135">
    <property type="entry name" value="Methylthiotransferase_N_sf"/>
</dbReference>
<dbReference type="InterPro" id="IPR006463">
    <property type="entry name" value="MiaB_methiolase"/>
</dbReference>
<dbReference type="InterPro" id="IPR007197">
    <property type="entry name" value="rSAM"/>
</dbReference>
<dbReference type="InterPro" id="IPR023404">
    <property type="entry name" value="rSAM_horseshoe"/>
</dbReference>
<dbReference type="InterPro" id="IPR002792">
    <property type="entry name" value="TRAM_dom"/>
</dbReference>
<dbReference type="NCBIfam" id="TIGR01574">
    <property type="entry name" value="miaB-methiolase"/>
    <property type="match status" value="1"/>
</dbReference>
<dbReference type="NCBIfam" id="TIGR00089">
    <property type="entry name" value="MiaB/RimO family radical SAM methylthiotransferase"/>
    <property type="match status" value="1"/>
</dbReference>
<dbReference type="PANTHER" id="PTHR43020">
    <property type="entry name" value="CDK5 REGULATORY SUBUNIT-ASSOCIATED PROTEIN 1"/>
    <property type="match status" value="1"/>
</dbReference>
<dbReference type="PANTHER" id="PTHR43020:SF2">
    <property type="entry name" value="MITOCHONDRIAL TRNA METHYLTHIOTRANSFERASE CDK5RAP1"/>
    <property type="match status" value="1"/>
</dbReference>
<dbReference type="Pfam" id="PF04055">
    <property type="entry name" value="Radical_SAM"/>
    <property type="match status" value="1"/>
</dbReference>
<dbReference type="Pfam" id="PF01938">
    <property type="entry name" value="TRAM"/>
    <property type="match status" value="1"/>
</dbReference>
<dbReference type="Pfam" id="PF00919">
    <property type="entry name" value="UPF0004"/>
    <property type="match status" value="1"/>
</dbReference>
<dbReference type="SFLD" id="SFLDF00273">
    <property type="entry name" value="(dimethylallyl)adenosine_tRNA"/>
    <property type="match status" value="1"/>
</dbReference>
<dbReference type="SFLD" id="SFLDG01082">
    <property type="entry name" value="B12-binding_domain_containing"/>
    <property type="match status" value="1"/>
</dbReference>
<dbReference type="SFLD" id="SFLDS00029">
    <property type="entry name" value="Radical_SAM"/>
    <property type="match status" value="1"/>
</dbReference>
<dbReference type="SMART" id="SM00729">
    <property type="entry name" value="Elp3"/>
    <property type="match status" value="1"/>
</dbReference>
<dbReference type="SUPFAM" id="SSF102114">
    <property type="entry name" value="Radical SAM enzymes"/>
    <property type="match status" value="1"/>
</dbReference>
<dbReference type="PROSITE" id="PS51449">
    <property type="entry name" value="MTTASE_N"/>
    <property type="match status" value="1"/>
</dbReference>
<dbReference type="PROSITE" id="PS01278">
    <property type="entry name" value="MTTASE_RADICAL"/>
    <property type="match status" value="1"/>
</dbReference>
<dbReference type="PROSITE" id="PS51918">
    <property type="entry name" value="RADICAL_SAM"/>
    <property type="match status" value="1"/>
</dbReference>
<dbReference type="PROSITE" id="PS50926">
    <property type="entry name" value="TRAM"/>
    <property type="match status" value="1"/>
</dbReference>